<dbReference type="EMBL" id="AJ437262">
    <property type="protein sequence ID" value="CAD24773.1"/>
    <property type="molecule type" value="mRNA"/>
</dbReference>
<dbReference type="EMBL" id="AK031046">
    <property type="protein sequence ID" value="BAC27228.1"/>
    <property type="molecule type" value="mRNA"/>
</dbReference>
<dbReference type="EMBL" id="AK156547">
    <property type="protein sequence ID" value="BAE33753.1"/>
    <property type="molecule type" value="mRNA"/>
</dbReference>
<dbReference type="EMBL" id="BC049788">
    <property type="protein sequence ID" value="AAH49788.1"/>
    <property type="molecule type" value="mRNA"/>
</dbReference>
<dbReference type="CCDS" id="CCDS16131.1"/>
<dbReference type="RefSeq" id="NP_001276651.1">
    <property type="nucleotide sequence ID" value="NM_001289722.1"/>
</dbReference>
<dbReference type="RefSeq" id="NP_001276652.1">
    <property type="nucleotide sequence ID" value="NM_001289723.1"/>
</dbReference>
<dbReference type="RefSeq" id="NP_694778.1">
    <property type="nucleotide sequence ID" value="NM_153138.4"/>
</dbReference>
<dbReference type="RefSeq" id="XP_006499187.1">
    <property type="nucleotide sequence ID" value="XM_006499124.5"/>
</dbReference>
<dbReference type="RefSeq" id="XP_006499190.1">
    <property type="nucleotide sequence ID" value="XM_006499127.2"/>
</dbReference>
<dbReference type="RefSeq" id="XP_011237735.1">
    <property type="nucleotide sequence ID" value="XM_011239433.2"/>
</dbReference>
<dbReference type="RefSeq" id="XP_036016242.1">
    <property type="nucleotide sequence ID" value="XM_036160349.1"/>
</dbReference>
<dbReference type="SMR" id="Q8K1I7"/>
<dbReference type="BioGRID" id="229611">
    <property type="interactions" value="2"/>
</dbReference>
<dbReference type="CORUM" id="Q8K1I7"/>
<dbReference type="DIP" id="DIP-37798N"/>
<dbReference type="FunCoup" id="Q8K1I7">
    <property type="interactions" value="537"/>
</dbReference>
<dbReference type="IntAct" id="Q8K1I7">
    <property type="interactions" value="8"/>
</dbReference>
<dbReference type="STRING" id="10090.ENSMUSP00000092268"/>
<dbReference type="GlyGen" id="Q8K1I7">
    <property type="glycosylation" value="1 site"/>
</dbReference>
<dbReference type="iPTMnet" id="Q8K1I7"/>
<dbReference type="PhosphoSitePlus" id="Q8K1I7"/>
<dbReference type="jPOST" id="Q8K1I7"/>
<dbReference type="PaxDb" id="10090-ENSMUSP00000092268"/>
<dbReference type="PeptideAtlas" id="Q8K1I7"/>
<dbReference type="ProteomicsDB" id="299786"/>
<dbReference type="Pumba" id="Q8K1I7"/>
<dbReference type="Antibodypedia" id="4053">
    <property type="antibodies" value="161 antibodies from 33 providers"/>
</dbReference>
<dbReference type="DNASU" id="215280"/>
<dbReference type="Ensembl" id="ENSMUST00000094681.11">
    <property type="protein sequence ID" value="ENSMUSP00000092268.5"/>
    <property type="gene ID" value="ENSMUSG00000075284.11"/>
</dbReference>
<dbReference type="Ensembl" id="ENSMUST00000102679.8">
    <property type="protein sequence ID" value="ENSMUSP00000099740.2"/>
    <property type="gene ID" value="ENSMUSG00000075284.11"/>
</dbReference>
<dbReference type="Ensembl" id="ENSMUST00000102680.8">
    <property type="protein sequence ID" value="ENSMUSP00000099741.2"/>
    <property type="gene ID" value="ENSMUSG00000075284.11"/>
</dbReference>
<dbReference type="GeneID" id="215280"/>
<dbReference type="KEGG" id="mmu:215280"/>
<dbReference type="UCSC" id="uc008kcu.2">
    <property type="organism name" value="mouse"/>
</dbReference>
<dbReference type="AGR" id="MGI:2178801"/>
<dbReference type="CTD" id="7456"/>
<dbReference type="MGI" id="MGI:2178801">
    <property type="gene designation" value="Wipf1"/>
</dbReference>
<dbReference type="VEuPathDB" id="HostDB:ENSMUSG00000075284"/>
<dbReference type="eggNOG" id="KOG4462">
    <property type="taxonomic scope" value="Eukaryota"/>
</dbReference>
<dbReference type="GeneTree" id="ENSGT00910000144296"/>
<dbReference type="HOGENOM" id="CLU_041032_0_0_1"/>
<dbReference type="InParanoid" id="Q8K1I7"/>
<dbReference type="OMA" id="NAFGHSQ"/>
<dbReference type="OrthoDB" id="6157464at2759"/>
<dbReference type="PhylomeDB" id="Q8K1I7"/>
<dbReference type="TreeFam" id="TF332135"/>
<dbReference type="Reactome" id="R-MMU-2029482">
    <property type="pathway name" value="Regulation of actin dynamics for phagocytic cup formation"/>
</dbReference>
<dbReference type="Reactome" id="R-MMU-5663213">
    <property type="pathway name" value="RHO GTPases Activate WASPs and WAVEs"/>
</dbReference>
<dbReference type="BioGRID-ORCS" id="215280">
    <property type="hits" value="2 hits in 77 CRISPR screens"/>
</dbReference>
<dbReference type="ChiTaRS" id="Wipf1">
    <property type="organism name" value="mouse"/>
</dbReference>
<dbReference type="PRO" id="PR:Q8K1I7"/>
<dbReference type="Proteomes" id="UP000000589">
    <property type="component" value="Chromosome 2"/>
</dbReference>
<dbReference type="RNAct" id="Q8K1I7">
    <property type="molecule type" value="protein"/>
</dbReference>
<dbReference type="Bgee" id="ENSMUSG00000075284">
    <property type="expression patterns" value="Expressed in granulocyte and 250 other cell types or tissues"/>
</dbReference>
<dbReference type="ExpressionAtlas" id="Q8K1I7">
    <property type="expression patterns" value="baseline and differential"/>
</dbReference>
<dbReference type="GO" id="GO:0015629">
    <property type="term" value="C:actin cytoskeleton"/>
    <property type="evidence" value="ECO:0000314"/>
    <property type="project" value="MGI"/>
</dbReference>
<dbReference type="GO" id="GO:0005884">
    <property type="term" value="C:actin filament"/>
    <property type="evidence" value="ECO:0000314"/>
    <property type="project" value="MGI"/>
</dbReference>
<dbReference type="GO" id="GO:0031410">
    <property type="term" value="C:cytoplasmic vesicle"/>
    <property type="evidence" value="ECO:0007669"/>
    <property type="project" value="UniProtKB-KW"/>
</dbReference>
<dbReference type="GO" id="GO:0001726">
    <property type="term" value="C:ruffle"/>
    <property type="evidence" value="ECO:0007669"/>
    <property type="project" value="UniProtKB-SubCell"/>
</dbReference>
<dbReference type="GO" id="GO:0003779">
    <property type="term" value="F:actin binding"/>
    <property type="evidence" value="ECO:0007669"/>
    <property type="project" value="UniProtKB-KW"/>
</dbReference>
<dbReference type="GO" id="GO:0008093">
    <property type="term" value="F:cytoskeletal anchor activity"/>
    <property type="evidence" value="ECO:0007669"/>
    <property type="project" value="Ensembl"/>
</dbReference>
<dbReference type="GO" id="GO:0017124">
    <property type="term" value="F:SH3 domain binding"/>
    <property type="evidence" value="ECO:0007669"/>
    <property type="project" value="Ensembl"/>
</dbReference>
<dbReference type="GO" id="GO:0030048">
    <property type="term" value="P:actin filament-based movement"/>
    <property type="evidence" value="ECO:0000314"/>
    <property type="project" value="MGI"/>
</dbReference>
<dbReference type="GO" id="GO:0051707">
    <property type="term" value="P:response to other organism"/>
    <property type="evidence" value="ECO:0000315"/>
    <property type="project" value="MGI"/>
</dbReference>
<dbReference type="CDD" id="cd22076">
    <property type="entry name" value="WH2_WAS_WASL-1"/>
    <property type="match status" value="1"/>
</dbReference>
<dbReference type="FunFam" id="2.30.29.30:FF:000294">
    <property type="entry name" value="WAS/WASL-interacting protein family member 1"/>
    <property type="match status" value="1"/>
</dbReference>
<dbReference type="Gene3D" id="2.30.29.30">
    <property type="entry name" value="Pleckstrin-homology domain (PH domain)/Phosphotyrosine-binding domain (PTB)"/>
    <property type="match status" value="1"/>
</dbReference>
<dbReference type="InterPro" id="IPR011993">
    <property type="entry name" value="PH-like_dom_sf"/>
</dbReference>
<dbReference type="InterPro" id="IPR053099">
    <property type="entry name" value="WAS/WASL-interacting_domain"/>
</dbReference>
<dbReference type="InterPro" id="IPR003124">
    <property type="entry name" value="WH2_dom"/>
</dbReference>
<dbReference type="PANTHER" id="PTHR48226">
    <property type="entry name" value="OS06G0326200 PROTEIN"/>
    <property type="match status" value="1"/>
</dbReference>
<dbReference type="PANTHER" id="PTHR48226:SF1">
    <property type="entry name" value="WAS_WASL-INTERACTING PROTEIN FAMILY MEMBER 1"/>
    <property type="match status" value="1"/>
</dbReference>
<dbReference type="Pfam" id="PF02205">
    <property type="entry name" value="WH2"/>
    <property type="match status" value="1"/>
</dbReference>
<dbReference type="SMART" id="SM00246">
    <property type="entry name" value="WH2"/>
    <property type="match status" value="1"/>
</dbReference>
<dbReference type="PROSITE" id="PS51082">
    <property type="entry name" value="WH2"/>
    <property type="match status" value="1"/>
</dbReference>
<gene>
    <name type="primary">Wipf1</name>
    <name type="synonym">Waspip</name>
    <name type="synonym">Wip</name>
</gene>
<organism>
    <name type="scientific">Mus musculus</name>
    <name type="common">Mouse</name>
    <dbReference type="NCBI Taxonomy" id="10090"/>
    <lineage>
        <taxon>Eukaryota</taxon>
        <taxon>Metazoa</taxon>
        <taxon>Chordata</taxon>
        <taxon>Craniata</taxon>
        <taxon>Vertebrata</taxon>
        <taxon>Euteleostomi</taxon>
        <taxon>Mammalia</taxon>
        <taxon>Eutheria</taxon>
        <taxon>Euarchontoglires</taxon>
        <taxon>Glires</taxon>
        <taxon>Rodentia</taxon>
        <taxon>Myomorpha</taxon>
        <taxon>Muroidea</taxon>
        <taxon>Muridae</taxon>
        <taxon>Murinae</taxon>
        <taxon>Mus</taxon>
        <taxon>Mus</taxon>
    </lineage>
</organism>
<comment type="function">
    <text evidence="1 5 6">Plays a role in the reorganization of the actin cytoskeleton. Contributes with NCK1 and GRB2 in the recruitment and activation of WASL. May participate in regulating the subcellular localization of WASL, resulting in the disassembly of stress fibers in favor of filopodia formation (By similarity). Plays a role in the formation of cell ruffles.</text>
</comment>
<comment type="subunit">
    <text evidence="1 2 5 6">Binds to WAS within the N-terminal region, at a site distinct from the CDC42-binding site. Binds profilin and actin (By similarity). Binds to WASL. Interacts with DBNL. Interacts with DBNL. Interacts with FNBP1L (via the SH3 domain) (By similarity).</text>
</comment>
<comment type="interaction">
    <interactant intactId="EBI-644216">
        <id>Q8K1I7</id>
    </interactant>
    <interactant intactId="EBI-644195">
        <id>P70315</id>
        <label>Was</label>
    </interactant>
    <organismsDiffer>false</organismsDiffer>
    <experiments>3</experiments>
</comment>
<comment type="subcellular location">
    <subcellularLocation>
        <location evidence="1">Cytoplasmic vesicle</location>
    </subcellularLocation>
    <subcellularLocation>
        <location evidence="1">Cytoplasm</location>
        <location evidence="1">Cytoskeleton</location>
    </subcellularLocation>
    <subcellularLocation>
        <location evidence="5 6">Cell projection</location>
        <location evidence="5 6">Ruffle</location>
    </subcellularLocation>
    <text evidence="1">Vesicle surfaces and along actin tails. Colocalizes with actin stress fibers. When coexpressed with WASL, no longer associated with actin filaments but accumulated in perinuclear and cortical areas like WASL (By similarity).</text>
</comment>
<comment type="miscellaneous">
    <text>Recruited to PIP5K-induced vesicle surfaces in the absence of functional WASL.</text>
</comment>
<comment type="similarity">
    <text evidence="7">Belongs to the verprolin family.</text>
</comment>
<accession>Q8K1I7</accession>
<accession>Q3U0U8</accession>
<feature type="chain" id="PRO_0000065942" description="WAS/WASL-interacting protein family member 1">
    <location>
        <begin position="1"/>
        <end position="493"/>
    </location>
</feature>
<feature type="domain" description="WH2" evidence="3">
    <location>
        <begin position="32"/>
        <end position="49"/>
    </location>
</feature>
<feature type="repeat" description="XRSGPXPPXP motif 1">
    <location>
        <begin position="342"/>
        <end position="351"/>
    </location>
</feature>
<feature type="repeat" description="XRSGPXPPXP motif 2">
    <location>
        <begin position="364"/>
        <end position="373"/>
    </location>
</feature>
<feature type="repeat" description="XRSGPXPPXP motif 3">
    <location>
        <begin position="400"/>
        <end position="409"/>
    </location>
</feature>
<feature type="region of interest" description="Disordered" evidence="4">
    <location>
        <begin position="1"/>
        <end position="493"/>
    </location>
</feature>
<feature type="region of interest" description="Binds actin" evidence="1">
    <location>
        <begin position="45"/>
        <end position="48"/>
    </location>
</feature>
<feature type="compositionally biased region" description="Pro residues" evidence="4">
    <location>
        <begin position="1"/>
        <end position="14"/>
    </location>
</feature>
<feature type="compositionally biased region" description="Polar residues" evidence="4">
    <location>
        <begin position="21"/>
        <end position="31"/>
    </location>
</feature>
<feature type="compositionally biased region" description="Gly residues" evidence="4">
    <location>
        <begin position="67"/>
        <end position="105"/>
    </location>
</feature>
<feature type="compositionally biased region" description="Pro residues" evidence="4">
    <location>
        <begin position="142"/>
        <end position="155"/>
    </location>
</feature>
<feature type="compositionally biased region" description="Pro residues" evidence="4">
    <location>
        <begin position="162"/>
        <end position="175"/>
    </location>
</feature>
<feature type="compositionally biased region" description="Pro residues" evidence="4">
    <location>
        <begin position="183"/>
        <end position="195"/>
    </location>
</feature>
<feature type="compositionally biased region" description="Pro residues" evidence="4">
    <location>
        <begin position="239"/>
        <end position="248"/>
    </location>
</feature>
<feature type="compositionally biased region" description="Pro residues" evidence="4">
    <location>
        <begin position="274"/>
        <end position="290"/>
    </location>
</feature>
<feature type="compositionally biased region" description="Pro residues" evidence="4">
    <location>
        <begin position="298"/>
        <end position="315"/>
    </location>
</feature>
<feature type="compositionally biased region" description="Pro residues" evidence="4">
    <location>
        <begin position="336"/>
        <end position="361"/>
    </location>
</feature>
<feature type="compositionally biased region" description="Pro residues" evidence="4">
    <location>
        <begin position="403"/>
        <end position="424"/>
    </location>
</feature>
<feature type="compositionally biased region" description="Polar residues" evidence="4">
    <location>
        <begin position="425"/>
        <end position="434"/>
    </location>
</feature>
<feature type="compositionally biased region" description="Basic and acidic residues" evidence="4">
    <location>
        <begin position="470"/>
        <end position="484"/>
    </location>
</feature>
<feature type="modified residue" description="Asymmetric dimethylarginine" evidence="10">
    <location>
        <position position="33"/>
    </location>
</feature>
<feature type="modified residue" description="Omega-N-methylarginine" evidence="10">
    <location>
        <position position="126"/>
    </location>
</feature>
<feature type="modified residue" description="Omega-N-methylarginine" evidence="10">
    <location>
        <position position="135"/>
    </location>
</feature>
<feature type="modified residue" description="Phosphoserine" evidence="8">
    <location>
        <position position="143"/>
    </location>
</feature>
<feature type="modified residue" description="Phosphoserine" evidence="2">
    <location>
        <position position="227"/>
    </location>
</feature>
<feature type="modified residue" description="Phosphoserine" evidence="8 9">
    <location>
        <position position="330"/>
    </location>
</feature>
<feature type="modified residue" description="Phosphoserine" evidence="2">
    <location>
        <position position="340"/>
    </location>
</feature>
<name>WIPF1_MOUSE</name>
<protein>
    <recommendedName>
        <fullName>WAS/WASL-interacting protein family member 1</fullName>
    </recommendedName>
    <alternativeName>
        <fullName>Wiskott-Aldrich syndrome protein-interacting protein</fullName>
        <shortName>WASP-interacting protein</shortName>
    </alternativeName>
</protein>
<proteinExistence type="evidence at protein level"/>
<sequence length="493" mass="50080">MPVPPPPAPPPPPTFALANTEKPTLNKTEQAGRNALLSDISKGKKLKKTVTNDRSAPILDKPKGAGASAGGYGGGGGGGGGGGGGGGGSGGNFGGGGPPGLGGLFQAGMPKLRSTANRDNDSGGSRPPILPPGGRATSAKPFSPPSGPGRFPAPSPGHRSGPPEPPRNRMPPPRPDVGSKPDSLPPPVPNTPRPVPSSLHNRGSPAGLGAPRPPFPGNRGAAFGAGSARQNPSGSSSPFPRPPLPPTPSRALDDKPPPPPPPVGNRPSMHREAVPPPPSQTSKPPVPSTPRPGLGSQAPPPPPPPSRPGPPPLPPASNDEIPRLPQRNLSLTSSAPPLPSPGRSGPLPPPPSERPPPPVRDPPGRSGPLPPPPPINRNGSTARALPATPQLPSRSGMDSPRSGPRPPLPPDRPGAGAPPPPPPSTSVRNGFQDSSCEDEWESRFYFHPISDLPPPEPYVPTTKTYPSKLARNESRSGSNRRERGAPPLPPIPR</sequence>
<keyword id="KW-0009">Actin-binding</keyword>
<keyword id="KW-0966">Cell projection</keyword>
<keyword id="KW-0963">Cytoplasm</keyword>
<keyword id="KW-0968">Cytoplasmic vesicle</keyword>
<keyword id="KW-0206">Cytoskeleton</keyword>
<keyword id="KW-0488">Methylation</keyword>
<keyword id="KW-0597">Phosphoprotein</keyword>
<keyword id="KW-1185">Reference proteome</keyword>
<keyword id="KW-0677">Repeat</keyword>
<evidence type="ECO:0000250" key="1"/>
<evidence type="ECO:0000250" key="2">
    <source>
        <dbReference type="UniProtKB" id="O43516"/>
    </source>
</evidence>
<evidence type="ECO:0000255" key="3">
    <source>
        <dbReference type="PROSITE-ProRule" id="PRU00406"/>
    </source>
</evidence>
<evidence type="ECO:0000256" key="4">
    <source>
        <dbReference type="SAM" id="MobiDB-lite"/>
    </source>
</evidence>
<evidence type="ECO:0000269" key="5">
    <source>
    </source>
</evidence>
<evidence type="ECO:0000269" key="6">
    <source>
    </source>
</evidence>
<evidence type="ECO:0000305" key="7"/>
<evidence type="ECO:0007744" key="8">
    <source>
    </source>
</evidence>
<evidence type="ECO:0007744" key="9">
    <source>
    </source>
</evidence>
<evidence type="ECO:0007744" key="10">
    <source>
    </source>
</evidence>
<reference key="1">
    <citation type="journal article" date="2002" name="J. Biol. Chem.">
        <title>Phosphatidylinositol 4,5-biphosphate (PIP2)-induced vesicle movement depends on N-WASP and involves Nck, WIP, and Grb2.</title>
        <authorList>
            <person name="Benesch S."/>
            <person name="Lommel S."/>
            <person name="Steffen A."/>
            <person name="Stradal T.E.B."/>
            <person name="Scaplehorn N."/>
            <person name="Way M."/>
            <person name="Wehland J."/>
            <person name="Rottner K."/>
        </authorList>
    </citation>
    <scope>NUCLEOTIDE SEQUENCE [MRNA]</scope>
    <scope>FUNCTION</scope>
    <scope>SUBCELLULAR LOCATION</scope>
    <scope>INTERACTION WITH WASL</scope>
    <source>
        <strain>C57BL/6J</strain>
        <tissue>Brain</tissue>
    </source>
</reference>
<reference key="2">
    <citation type="journal article" date="2005" name="Science">
        <title>The transcriptional landscape of the mammalian genome.</title>
        <authorList>
            <person name="Carninci P."/>
            <person name="Kasukawa T."/>
            <person name="Katayama S."/>
            <person name="Gough J."/>
            <person name="Frith M.C."/>
            <person name="Maeda N."/>
            <person name="Oyama R."/>
            <person name="Ravasi T."/>
            <person name="Lenhard B."/>
            <person name="Wells C."/>
            <person name="Kodzius R."/>
            <person name="Shimokawa K."/>
            <person name="Bajic V.B."/>
            <person name="Brenner S.E."/>
            <person name="Batalov S."/>
            <person name="Forrest A.R."/>
            <person name="Zavolan M."/>
            <person name="Davis M.J."/>
            <person name="Wilming L.G."/>
            <person name="Aidinis V."/>
            <person name="Allen J.E."/>
            <person name="Ambesi-Impiombato A."/>
            <person name="Apweiler R."/>
            <person name="Aturaliya R.N."/>
            <person name="Bailey T.L."/>
            <person name="Bansal M."/>
            <person name="Baxter L."/>
            <person name="Beisel K.W."/>
            <person name="Bersano T."/>
            <person name="Bono H."/>
            <person name="Chalk A.M."/>
            <person name="Chiu K.P."/>
            <person name="Choudhary V."/>
            <person name="Christoffels A."/>
            <person name="Clutterbuck D.R."/>
            <person name="Crowe M.L."/>
            <person name="Dalla E."/>
            <person name="Dalrymple B.P."/>
            <person name="de Bono B."/>
            <person name="Della Gatta G."/>
            <person name="di Bernardo D."/>
            <person name="Down T."/>
            <person name="Engstrom P."/>
            <person name="Fagiolini M."/>
            <person name="Faulkner G."/>
            <person name="Fletcher C.F."/>
            <person name="Fukushima T."/>
            <person name="Furuno M."/>
            <person name="Futaki S."/>
            <person name="Gariboldi M."/>
            <person name="Georgii-Hemming P."/>
            <person name="Gingeras T.R."/>
            <person name="Gojobori T."/>
            <person name="Green R.E."/>
            <person name="Gustincich S."/>
            <person name="Harbers M."/>
            <person name="Hayashi Y."/>
            <person name="Hensch T.K."/>
            <person name="Hirokawa N."/>
            <person name="Hill D."/>
            <person name="Huminiecki L."/>
            <person name="Iacono M."/>
            <person name="Ikeo K."/>
            <person name="Iwama A."/>
            <person name="Ishikawa T."/>
            <person name="Jakt M."/>
            <person name="Kanapin A."/>
            <person name="Katoh M."/>
            <person name="Kawasawa Y."/>
            <person name="Kelso J."/>
            <person name="Kitamura H."/>
            <person name="Kitano H."/>
            <person name="Kollias G."/>
            <person name="Krishnan S.P."/>
            <person name="Kruger A."/>
            <person name="Kummerfeld S.K."/>
            <person name="Kurochkin I.V."/>
            <person name="Lareau L.F."/>
            <person name="Lazarevic D."/>
            <person name="Lipovich L."/>
            <person name="Liu J."/>
            <person name="Liuni S."/>
            <person name="McWilliam S."/>
            <person name="Madan Babu M."/>
            <person name="Madera M."/>
            <person name="Marchionni L."/>
            <person name="Matsuda H."/>
            <person name="Matsuzawa S."/>
            <person name="Miki H."/>
            <person name="Mignone F."/>
            <person name="Miyake S."/>
            <person name="Morris K."/>
            <person name="Mottagui-Tabar S."/>
            <person name="Mulder N."/>
            <person name="Nakano N."/>
            <person name="Nakauchi H."/>
            <person name="Ng P."/>
            <person name="Nilsson R."/>
            <person name="Nishiguchi S."/>
            <person name="Nishikawa S."/>
            <person name="Nori F."/>
            <person name="Ohara O."/>
            <person name="Okazaki Y."/>
            <person name="Orlando V."/>
            <person name="Pang K.C."/>
            <person name="Pavan W.J."/>
            <person name="Pavesi G."/>
            <person name="Pesole G."/>
            <person name="Petrovsky N."/>
            <person name="Piazza S."/>
            <person name="Reed J."/>
            <person name="Reid J.F."/>
            <person name="Ring B.Z."/>
            <person name="Ringwald M."/>
            <person name="Rost B."/>
            <person name="Ruan Y."/>
            <person name="Salzberg S.L."/>
            <person name="Sandelin A."/>
            <person name="Schneider C."/>
            <person name="Schoenbach C."/>
            <person name="Sekiguchi K."/>
            <person name="Semple C.A."/>
            <person name="Seno S."/>
            <person name="Sessa L."/>
            <person name="Sheng Y."/>
            <person name="Shibata Y."/>
            <person name="Shimada H."/>
            <person name="Shimada K."/>
            <person name="Silva D."/>
            <person name="Sinclair B."/>
            <person name="Sperling S."/>
            <person name="Stupka E."/>
            <person name="Sugiura K."/>
            <person name="Sultana R."/>
            <person name="Takenaka Y."/>
            <person name="Taki K."/>
            <person name="Tammoja K."/>
            <person name="Tan S.L."/>
            <person name="Tang S."/>
            <person name="Taylor M.S."/>
            <person name="Tegner J."/>
            <person name="Teichmann S.A."/>
            <person name="Ueda H.R."/>
            <person name="van Nimwegen E."/>
            <person name="Verardo R."/>
            <person name="Wei C.L."/>
            <person name="Yagi K."/>
            <person name="Yamanishi H."/>
            <person name="Zabarovsky E."/>
            <person name="Zhu S."/>
            <person name="Zimmer A."/>
            <person name="Hide W."/>
            <person name="Bult C."/>
            <person name="Grimmond S.M."/>
            <person name="Teasdale R.D."/>
            <person name="Liu E.T."/>
            <person name="Brusic V."/>
            <person name="Quackenbush J."/>
            <person name="Wahlestedt C."/>
            <person name="Mattick J.S."/>
            <person name="Hume D.A."/>
            <person name="Kai C."/>
            <person name="Sasaki D."/>
            <person name="Tomaru Y."/>
            <person name="Fukuda S."/>
            <person name="Kanamori-Katayama M."/>
            <person name="Suzuki M."/>
            <person name="Aoki J."/>
            <person name="Arakawa T."/>
            <person name="Iida J."/>
            <person name="Imamura K."/>
            <person name="Itoh M."/>
            <person name="Kato T."/>
            <person name="Kawaji H."/>
            <person name="Kawagashira N."/>
            <person name="Kawashima T."/>
            <person name="Kojima M."/>
            <person name="Kondo S."/>
            <person name="Konno H."/>
            <person name="Nakano K."/>
            <person name="Ninomiya N."/>
            <person name="Nishio T."/>
            <person name="Okada M."/>
            <person name="Plessy C."/>
            <person name="Shibata K."/>
            <person name="Shiraki T."/>
            <person name="Suzuki S."/>
            <person name="Tagami M."/>
            <person name="Waki K."/>
            <person name="Watahiki A."/>
            <person name="Okamura-Oho Y."/>
            <person name="Suzuki H."/>
            <person name="Kawai J."/>
            <person name="Hayashizaki Y."/>
        </authorList>
    </citation>
    <scope>NUCLEOTIDE SEQUENCE [LARGE SCALE MRNA]</scope>
    <source>
        <strain>C57BL/6J</strain>
        <strain>NOD</strain>
        <tissue>Spleen</tissue>
        <tissue>Thymus</tissue>
    </source>
</reference>
<reference key="3">
    <citation type="journal article" date="2004" name="Genome Res.">
        <title>The status, quality, and expansion of the NIH full-length cDNA project: the Mammalian Gene Collection (MGC).</title>
        <authorList>
            <consortium name="The MGC Project Team"/>
        </authorList>
    </citation>
    <scope>NUCLEOTIDE SEQUENCE [LARGE SCALE MRNA]</scope>
    <source>
        <tissue>Limb</tissue>
    </source>
</reference>
<reference key="4">
    <citation type="journal article" date="2009" name="Immunity">
        <title>The phagosomal proteome in interferon-gamma-activated macrophages.</title>
        <authorList>
            <person name="Trost M."/>
            <person name="English L."/>
            <person name="Lemieux S."/>
            <person name="Courcelles M."/>
            <person name="Desjardins M."/>
            <person name="Thibault P."/>
        </authorList>
    </citation>
    <scope>PHOSPHORYLATION [LARGE SCALE ANALYSIS] AT SER-143 AND SER-330</scope>
    <scope>IDENTIFICATION BY MASS SPECTROMETRY [LARGE SCALE ANALYSIS]</scope>
</reference>
<reference key="5">
    <citation type="journal article" date="2010" name="Cell">
        <title>A tissue-specific atlas of mouse protein phosphorylation and expression.</title>
        <authorList>
            <person name="Huttlin E.L."/>
            <person name="Jedrychowski M.P."/>
            <person name="Elias J.E."/>
            <person name="Goswami T."/>
            <person name="Rad R."/>
            <person name="Beausoleil S.A."/>
            <person name="Villen J."/>
            <person name="Haas W."/>
            <person name="Sowa M.E."/>
            <person name="Gygi S.P."/>
        </authorList>
    </citation>
    <scope>PHOSPHORYLATION [LARGE SCALE ANALYSIS] AT SER-330</scope>
    <scope>IDENTIFICATION BY MASS SPECTROMETRY [LARGE SCALE ANALYSIS]</scope>
    <source>
        <tissue>Brown adipose tissue</tissue>
        <tissue>Kidney</tissue>
        <tissue>Lung</tissue>
        <tissue>Spleen</tissue>
    </source>
</reference>
<reference key="6">
    <citation type="journal article" date="2010" name="Mol. Biol. Cell">
        <title>Actin-binding protein-1 interacts with WASp-interacting protein to regulate growth factor-induced dorsal ruffle formation.</title>
        <authorList>
            <person name="Cortesio C.L."/>
            <person name="Perrin B.J."/>
            <person name="Bennin D.A."/>
            <person name="Huttenlocher A."/>
        </authorList>
    </citation>
    <scope>FUNCTION</scope>
    <scope>SUBCELLULAR LOCATION</scope>
    <scope>INTERACTION WITH DBNL</scope>
</reference>
<reference key="7">
    <citation type="journal article" date="2014" name="Mol. Cell. Proteomics">
        <title>Immunoaffinity enrichment and mass spectrometry analysis of protein methylation.</title>
        <authorList>
            <person name="Guo A."/>
            <person name="Gu H."/>
            <person name="Zhou J."/>
            <person name="Mulhern D."/>
            <person name="Wang Y."/>
            <person name="Lee K.A."/>
            <person name="Yang V."/>
            <person name="Aguiar M."/>
            <person name="Kornhauser J."/>
            <person name="Jia X."/>
            <person name="Ren J."/>
            <person name="Beausoleil S.A."/>
            <person name="Silva J.C."/>
            <person name="Vemulapalli V."/>
            <person name="Bedford M.T."/>
            <person name="Comb M.J."/>
        </authorList>
    </citation>
    <scope>METHYLATION [LARGE SCALE ANALYSIS] AT ARG-33; ARG-126 AND ARG-135</scope>
    <scope>IDENTIFICATION BY MASS SPECTROMETRY [LARGE SCALE ANALYSIS]</scope>
    <source>
        <tissue>Brain</tissue>
        <tissue>Embryo</tissue>
    </source>
</reference>